<sequence>MIDSNRKWSLIMKNTLHNLVKTELHCHLDGSLSFETIRELAEMANIALPESDSELAKLVTVPEDSETLLDYLKTFDFIRPLLQTQKALSLAAYDVAKQAAAEHVLYIEIRFAPELSMDKGLSAVQVVEAVEKGLQKAQRDFNIVAKVLICGMRQSSKQLTKEIFRQINQAKSLEFAGFDFAGNEHDFPPQEIADLIRFTQRLDRPMTFHAGECGCPSHIAQSIALGIKRLGHVTAIHDHPELIADFVENKVTAELCLTSNLQTKAAKSLAEFPYQELYEAGAKITINTDNRTVSNTNLTKEYQLFVDYFGTSLADFYHFNQNAIEASFASEAEKAELLAELKKAYGQTD</sequence>
<comment type="function">
    <text evidence="1">Catalyzes the hydrolytic deamination of adenosine and 2-deoxyadenosine.</text>
</comment>
<comment type="catalytic activity">
    <reaction evidence="1">
        <text>adenosine + H2O + H(+) = inosine + NH4(+)</text>
        <dbReference type="Rhea" id="RHEA:24408"/>
        <dbReference type="ChEBI" id="CHEBI:15377"/>
        <dbReference type="ChEBI" id="CHEBI:15378"/>
        <dbReference type="ChEBI" id="CHEBI:16335"/>
        <dbReference type="ChEBI" id="CHEBI:17596"/>
        <dbReference type="ChEBI" id="CHEBI:28938"/>
        <dbReference type="EC" id="3.5.4.4"/>
    </reaction>
    <physiologicalReaction direction="left-to-right" evidence="1">
        <dbReference type="Rhea" id="RHEA:24409"/>
    </physiologicalReaction>
</comment>
<comment type="catalytic activity">
    <reaction evidence="1">
        <text>2'-deoxyadenosine + H2O + H(+) = 2'-deoxyinosine + NH4(+)</text>
        <dbReference type="Rhea" id="RHEA:28190"/>
        <dbReference type="ChEBI" id="CHEBI:15377"/>
        <dbReference type="ChEBI" id="CHEBI:15378"/>
        <dbReference type="ChEBI" id="CHEBI:17256"/>
        <dbReference type="ChEBI" id="CHEBI:28938"/>
        <dbReference type="ChEBI" id="CHEBI:28997"/>
        <dbReference type="EC" id="3.5.4.4"/>
    </reaction>
    <physiologicalReaction direction="left-to-right" evidence="1">
        <dbReference type="Rhea" id="RHEA:28191"/>
    </physiologicalReaction>
</comment>
<comment type="cofactor">
    <cofactor evidence="1">
        <name>Zn(2+)</name>
        <dbReference type="ChEBI" id="CHEBI:29105"/>
    </cofactor>
    <text evidence="1">Binds 1 zinc ion per subunit.</text>
</comment>
<comment type="similarity">
    <text evidence="1">Belongs to the metallo-dependent hydrolases superfamily. Adenosine and AMP deaminases family. Adenosine deaminase subfamily.</text>
</comment>
<organism>
    <name type="scientific">Streptococcus mutans serotype c (strain ATCC 700610 / UA159)</name>
    <dbReference type="NCBI Taxonomy" id="210007"/>
    <lineage>
        <taxon>Bacteria</taxon>
        <taxon>Bacillati</taxon>
        <taxon>Bacillota</taxon>
        <taxon>Bacilli</taxon>
        <taxon>Lactobacillales</taxon>
        <taxon>Streptococcaceae</taxon>
        <taxon>Streptococcus</taxon>
    </lineage>
</organism>
<accession>Q8DTN8</accession>
<gene>
    <name evidence="1" type="primary">add</name>
    <name type="ordered locus">SMU_1295</name>
</gene>
<proteinExistence type="inferred from homology"/>
<feature type="chain" id="PRO_0000194394" description="Adenosine deaminase">
    <location>
        <begin position="1"/>
        <end position="349"/>
    </location>
</feature>
<feature type="active site" description="Proton donor" evidence="1">
    <location>
        <position position="212"/>
    </location>
</feature>
<feature type="binding site" evidence="1">
    <location>
        <position position="25"/>
    </location>
    <ligand>
        <name>Zn(2+)</name>
        <dbReference type="ChEBI" id="CHEBI:29105"/>
        <note>catalytic</note>
    </ligand>
</feature>
<feature type="binding site" evidence="1">
    <location>
        <position position="27"/>
    </location>
    <ligand>
        <name>substrate</name>
    </ligand>
</feature>
<feature type="binding site" evidence="1">
    <location>
        <position position="27"/>
    </location>
    <ligand>
        <name>Zn(2+)</name>
        <dbReference type="ChEBI" id="CHEBI:29105"/>
        <note>catalytic</note>
    </ligand>
</feature>
<feature type="binding site" evidence="1">
    <location>
        <position position="29"/>
    </location>
    <ligand>
        <name>substrate</name>
    </ligand>
</feature>
<feature type="binding site" evidence="1">
    <location>
        <position position="182"/>
    </location>
    <ligand>
        <name>substrate</name>
    </ligand>
</feature>
<feature type="binding site" evidence="1">
    <location>
        <position position="209"/>
    </location>
    <ligand>
        <name>Zn(2+)</name>
        <dbReference type="ChEBI" id="CHEBI:29105"/>
        <note>catalytic</note>
    </ligand>
</feature>
<feature type="binding site" evidence="1">
    <location>
        <position position="289"/>
    </location>
    <ligand>
        <name>Zn(2+)</name>
        <dbReference type="ChEBI" id="CHEBI:29105"/>
        <note>catalytic</note>
    </ligand>
</feature>
<feature type="site" description="Important for catalytic activity" evidence="1">
    <location>
        <position position="232"/>
    </location>
</feature>
<evidence type="ECO:0000255" key="1">
    <source>
        <dbReference type="HAMAP-Rule" id="MF_00540"/>
    </source>
</evidence>
<protein>
    <recommendedName>
        <fullName evidence="1">Adenosine deaminase</fullName>
        <ecNumber evidence="1">3.5.4.4</ecNumber>
    </recommendedName>
    <alternativeName>
        <fullName evidence="1">Adenosine aminohydrolase</fullName>
    </alternativeName>
</protein>
<name>ADD_STRMU</name>
<dbReference type="EC" id="3.5.4.4" evidence="1"/>
<dbReference type="EMBL" id="AE014133">
    <property type="protein sequence ID" value="AAN58972.1"/>
    <property type="molecule type" value="Genomic_DNA"/>
</dbReference>
<dbReference type="RefSeq" id="NP_721666.1">
    <property type="nucleotide sequence ID" value="NC_004350.2"/>
</dbReference>
<dbReference type="RefSeq" id="WP_011074606.1">
    <property type="nucleotide sequence ID" value="NC_004350.2"/>
</dbReference>
<dbReference type="SMR" id="Q8DTN8"/>
<dbReference type="STRING" id="210007.SMU_1295"/>
<dbReference type="KEGG" id="smu:SMU_1295"/>
<dbReference type="PATRIC" id="fig|210007.7.peg.1160"/>
<dbReference type="eggNOG" id="COG1816">
    <property type="taxonomic scope" value="Bacteria"/>
</dbReference>
<dbReference type="HOGENOM" id="CLU_039228_0_0_9"/>
<dbReference type="OrthoDB" id="9779574at2"/>
<dbReference type="PhylomeDB" id="Q8DTN8"/>
<dbReference type="Proteomes" id="UP000002512">
    <property type="component" value="Chromosome"/>
</dbReference>
<dbReference type="GO" id="GO:0046936">
    <property type="term" value="F:2'-deoxyadenosine deaminase activity"/>
    <property type="evidence" value="ECO:0007669"/>
    <property type="project" value="RHEA"/>
</dbReference>
<dbReference type="GO" id="GO:0004000">
    <property type="term" value="F:adenosine deaminase activity"/>
    <property type="evidence" value="ECO:0007669"/>
    <property type="project" value="UniProtKB-UniRule"/>
</dbReference>
<dbReference type="GO" id="GO:0008270">
    <property type="term" value="F:zinc ion binding"/>
    <property type="evidence" value="ECO:0007669"/>
    <property type="project" value="UniProtKB-UniRule"/>
</dbReference>
<dbReference type="GO" id="GO:0006154">
    <property type="term" value="P:adenosine catabolic process"/>
    <property type="evidence" value="ECO:0007669"/>
    <property type="project" value="TreeGrafter"/>
</dbReference>
<dbReference type="GO" id="GO:0046103">
    <property type="term" value="P:inosine biosynthetic process"/>
    <property type="evidence" value="ECO:0007669"/>
    <property type="project" value="TreeGrafter"/>
</dbReference>
<dbReference type="GO" id="GO:0009117">
    <property type="term" value="P:nucleotide metabolic process"/>
    <property type="evidence" value="ECO:0007669"/>
    <property type="project" value="UniProtKB-KW"/>
</dbReference>
<dbReference type="GO" id="GO:0009168">
    <property type="term" value="P:purine ribonucleoside monophosphate biosynthetic process"/>
    <property type="evidence" value="ECO:0007669"/>
    <property type="project" value="UniProtKB-UniRule"/>
</dbReference>
<dbReference type="CDD" id="cd01320">
    <property type="entry name" value="ADA"/>
    <property type="match status" value="1"/>
</dbReference>
<dbReference type="Gene3D" id="3.20.20.140">
    <property type="entry name" value="Metal-dependent hydrolases"/>
    <property type="match status" value="1"/>
</dbReference>
<dbReference type="HAMAP" id="MF_00540">
    <property type="entry name" value="A_deaminase"/>
    <property type="match status" value="1"/>
</dbReference>
<dbReference type="InterPro" id="IPR028893">
    <property type="entry name" value="A_deaminase"/>
</dbReference>
<dbReference type="InterPro" id="IPR001365">
    <property type="entry name" value="A_deaminase_dom"/>
</dbReference>
<dbReference type="InterPro" id="IPR006330">
    <property type="entry name" value="Ado/ade_deaminase"/>
</dbReference>
<dbReference type="InterPro" id="IPR032466">
    <property type="entry name" value="Metal_Hydrolase"/>
</dbReference>
<dbReference type="NCBIfam" id="TIGR01430">
    <property type="entry name" value="aden_deam"/>
    <property type="match status" value="1"/>
</dbReference>
<dbReference type="PANTHER" id="PTHR11409">
    <property type="entry name" value="ADENOSINE DEAMINASE"/>
    <property type="match status" value="1"/>
</dbReference>
<dbReference type="PANTHER" id="PTHR11409:SF42">
    <property type="entry name" value="ADENOSINE DEAMINASE-LIKE PROTEIN"/>
    <property type="match status" value="1"/>
</dbReference>
<dbReference type="Pfam" id="PF00962">
    <property type="entry name" value="A_deaminase"/>
    <property type="match status" value="1"/>
</dbReference>
<dbReference type="SUPFAM" id="SSF51556">
    <property type="entry name" value="Metallo-dependent hydrolases"/>
    <property type="match status" value="1"/>
</dbReference>
<reference key="1">
    <citation type="journal article" date="2002" name="Proc. Natl. Acad. Sci. U.S.A.">
        <title>Genome sequence of Streptococcus mutans UA159, a cariogenic dental pathogen.</title>
        <authorList>
            <person name="Ajdic D.J."/>
            <person name="McShan W.M."/>
            <person name="McLaughlin R.E."/>
            <person name="Savic G."/>
            <person name="Chang J."/>
            <person name="Carson M.B."/>
            <person name="Primeaux C."/>
            <person name="Tian R."/>
            <person name="Kenton S."/>
            <person name="Jia H.G."/>
            <person name="Lin S.P."/>
            <person name="Qian Y."/>
            <person name="Li S."/>
            <person name="Zhu H."/>
            <person name="Najar F.Z."/>
            <person name="Lai H."/>
            <person name="White J."/>
            <person name="Roe B.A."/>
            <person name="Ferretti J.J."/>
        </authorList>
    </citation>
    <scope>NUCLEOTIDE SEQUENCE [LARGE SCALE GENOMIC DNA]</scope>
    <source>
        <strain>ATCC 700610 / UA159</strain>
    </source>
</reference>
<keyword id="KW-0378">Hydrolase</keyword>
<keyword id="KW-0479">Metal-binding</keyword>
<keyword id="KW-0546">Nucleotide metabolism</keyword>
<keyword id="KW-1185">Reference proteome</keyword>
<keyword id="KW-0862">Zinc</keyword>